<name>DMSA_ECOLI</name>
<evidence type="ECO:0000250" key="1"/>
<evidence type="ECO:0000255" key="2">
    <source>
        <dbReference type="PROSITE-ProRule" id="PRU00648"/>
    </source>
</evidence>
<evidence type="ECO:0000255" key="3">
    <source>
        <dbReference type="PROSITE-ProRule" id="PRU01004"/>
    </source>
</evidence>
<evidence type="ECO:0000269" key="4">
    <source>
    </source>
</evidence>
<evidence type="ECO:0000269" key="5">
    <source>
    </source>
</evidence>
<evidence type="ECO:0000269" key="6">
    <source>
    </source>
</evidence>
<evidence type="ECO:0000269" key="7">
    <source>
    </source>
</evidence>
<evidence type="ECO:0000269" key="8">
    <source>
    </source>
</evidence>
<evidence type="ECO:0000269" key="9">
    <source>
    </source>
</evidence>
<evidence type="ECO:0000269" key="10">
    <source>
    </source>
</evidence>
<evidence type="ECO:0000269" key="11">
    <source>
    </source>
</evidence>
<evidence type="ECO:0000305" key="12"/>
<gene>
    <name type="primary">dmsA</name>
    <name type="ordered locus">b0894</name>
    <name type="ordered locus">JW5118</name>
</gene>
<proteinExistence type="evidence at protein level"/>
<reference key="1">
    <citation type="journal article" date="1988" name="Mol. Microbiol.">
        <title>Nucleotide sequence of the dmsABC operon encoding the anaerobic dimethylsulphoxide reductase of Escherichia coli.</title>
        <authorList>
            <person name="Bilous P.T."/>
            <person name="Cole S.T."/>
            <person name="Anderson W.F."/>
            <person name="Weiner J.H."/>
        </authorList>
    </citation>
    <scope>NUCLEOTIDE SEQUENCE [GENOMIC DNA]</scope>
    <scope>PROTEIN SEQUENCE OF 46-51</scope>
    <scope>FUNCTION AS A DIMETHYLSULPHOXIDE REDUCTASE</scope>
    <source>
        <strain>K12 / C600 / CR34 / ATCC 23724 / DSM 3925 / LMG 3041 / NCIB 10222</strain>
    </source>
</reference>
<reference key="2">
    <citation type="journal article" date="1996" name="DNA Res.">
        <title>A 718-kb DNA sequence of the Escherichia coli K-12 genome corresponding to the 12.7-28.0 min region on the linkage map.</title>
        <authorList>
            <person name="Oshima T."/>
            <person name="Aiba H."/>
            <person name="Baba T."/>
            <person name="Fujita K."/>
            <person name="Hayashi K."/>
            <person name="Honjo A."/>
            <person name="Ikemoto K."/>
            <person name="Inada T."/>
            <person name="Itoh T."/>
            <person name="Kajihara M."/>
            <person name="Kanai K."/>
            <person name="Kashimoto K."/>
            <person name="Kimura S."/>
            <person name="Kitagawa M."/>
            <person name="Makino K."/>
            <person name="Masuda S."/>
            <person name="Miki T."/>
            <person name="Mizobuchi K."/>
            <person name="Mori H."/>
            <person name="Motomura K."/>
            <person name="Nakamura Y."/>
            <person name="Nashimoto H."/>
            <person name="Nishio Y."/>
            <person name="Saito N."/>
            <person name="Sampei G."/>
            <person name="Seki Y."/>
            <person name="Tagami H."/>
            <person name="Takemoto K."/>
            <person name="Wada C."/>
            <person name="Yamamoto Y."/>
            <person name="Yano M."/>
            <person name="Horiuchi T."/>
        </authorList>
    </citation>
    <scope>NUCLEOTIDE SEQUENCE [LARGE SCALE GENOMIC DNA]</scope>
    <source>
        <strain>K12 / W3110 / ATCC 27325 / DSM 5911</strain>
    </source>
</reference>
<reference key="3">
    <citation type="journal article" date="1997" name="Science">
        <title>The complete genome sequence of Escherichia coli K-12.</title>
        <authorList>
            <person name="Blattner F.R."/>
            <person name="Plunkett G. III"/>
            <person name="Bloch C.A."/>
            <person name="Perna N.T."/>
            <person name="Burland V."/>
            <person name="Riley M."/>
            <person name="Collado-Vides J."/>
            <person name="Glasner J.D."/>
            <person name="Rode C.K."/>
            <person name="Mayhew G.F."/>
            <person name="Gregor J."/>
            <person name="Davis N.W."/>
            <person name="Kirkpatrick H.A."/>
            <person name="Goeden M.A."/>
            <person name="Rose D.J."/>
            <person name="Mau B."/>
            <person name="Shao Y."/>
        </authorList>
    </citation>
    <scope>NUCLEOTIDE SEQUENCE [LARGE SCALE GENOMIC DNA]</scope>
    <source>
        <strain>K12 / MG1655 / ATCC 47076</strain>
    </source>
</reference>
<reference key="4">
    <citation type="journal article" date="2006" name="Mol. Syst. Biol.">
        <title>Highly accurate genome sequences of Escherichia coli K-12 strains MG1655 and W3110.</title>
        <authorList>
            <person name="Hayashi K."/>
            <person name="Morooka N."/>
            <person name="Yamamoto Y."/>
            <person name="Fujita K."/>
            <person name="Isono K."/>
            <person name="Choi S."/>
            <person name="Ohtsubo E."/>
            <person name="Baba T."/>
            <person name="Wanner B.L."/>
            <person name="Mori H."/>
            <person name="Horiuchi T."/>
        </authorList>
    </citation>
    <scope>NUCLEOTIDE SEQUENCE [LARGE SCALE GENOMIC DNA]</scope>
    <source>
        <strain>K12 / W3110 / ATCC 27325 / DSM 5911</strain>
    </source>
</reference>
<reference key="5">
    <citation type="journal article" date="1988" name="J. Bacteriol.">
        <title>Purification and properties of Escherichia coli dimethyl sulfoxide reductase, an iron-sulfur molybdoenzyme with broad substrate specificity.</title>
        <authorList>
            <person name="Weiner J.H."/>
            <person name="MacIsaac D.P."/>
            <person name="Bishop R.E."/>
            <person name="Bilous P.T."/>
        </authorList>
    </citation>
    <scope>SUBSTRATE SPECIFICITY</scope>
    <scope>BIOPHYSICOCHEMICAL PROPERTIES</scope>
    <scope>SUBCELLULAR LOCATION</scope>
    <scope>SUBUNIT</scope>
    <scope>COFACTOR</scope>
</reference>
<reference key="6">
    <citation type="journal article" date="1990" name="J. Bacteriol.">
        <title>Organization of dimethyl sulfoxide reductase in the plasma membrane of Escherichia coli.</title>
        <authorList>
            <person name="Sambasivarao D."/>
            <person name="Scraba D.G."/>
            <person name="Trieber C."/>
            <person name="Weiner J.H."/>
        </authorList>
    </citation>
    <scope>SUBCELLULAR LOCATION</scope>
</reference>
<reference key="7">
    <citation type="journal article" date="1994" name="J. Biol. Chem.">
        <title>Multiple pathways of electron transfer in dimethyl sulfoxide reductase of Escherichia coli.</title>
        <authorList>
            <person name="Trieber C.A."/>
            <person name="Rothery R.A."/>
            <person name="Weiner J.H."/>
        </authorList>
    </citation>
    <scope>MUTAGENESIS OF LYS-57; CYS-67; CYS-71; CYS-104 AND ARG-106</scope>
</reference>
<reference key="8">
    <citation type="journal article" date="1995" name="J. Bacteriol.">
        <title>Association of molybdopterin guanine dinucleotide with Escherichia coli dimethyl sulfoxide reductase: effect of tungstate and a mob mutation.</title>
        <authorList>
            <person name="Rothery R.A."/>
            <person name="Grant J.L."/>
            <person name="Johnson J.L."/>
            <person name="Rajagopalan K.V."/>
            <person name="Weiner J.H."/>
        </authorList>
    </citation>
    <scope>COFACTOR</scope>
    <scope>ACTIVITY REGULATION</scope>
</reference>
<reference key="9">
    <citation type="journal article" date="1996" name="Microbiology">
        <title>Kinetic analysis and substrate specificity of Escherichia coli dimethyl sulfoxide reductase.</title>
        <authorList>
            <person name="Simala-Grant J.L."/>
            <person name="Weiner J.H."/>
        </authorList>
    </citation>
    <scope>BIOPHYSICOCHEMICAL PROPERTIES</scope>
    <scope>ACTIVITY REGULATION</scope>
    <scope>SUBSTRATE SPECIFICITY</scope>
</reference>
<reference key="10">
    <citation type="journal article" date="1999" name="J. Biol. Chem.">
        <title>Interactions between the molybdenum cofactor and iron-sulfur clusters of Escherichia coli dimethylsulfoxide reductase.</title>
        <authorList>
            <person name="Rothery R.A."/>
            <person name="Trieber C.A."/>
            <person name="Weiner J.H."/>
        </authorList>
    </citation>
    <scope>MUTAGENESIS OF CYS-67 AND ARG-106</scope>
    <scope>COFACTOR</scope>
</reference>
<reference key="11">
    <citation type="journal article" date="2000" name="J. Biol. Chem.">
        <title>Multiple roles for the twin arginine leader sequence of dimethyl sulfoxide reductase of Escherichia coli.</title>
        <authorList>
            <person name="Sambasivarao D."/>
            <person name="Turner R.J."/>
            <person name="Simala-Grant J.L."/>
            <person name="Shaw G."/>
            <person name="Hu J."/>
            <person name="Weiner J.H."/>
        </authorList>
    </citation>
    <scope>EXPORT VIA THE TAT-SYSTEM</scope>
    <scope>MUTAGENESIS OF ARG-17</scope>
</reference>
<reference key="12">
    <citation type="journal article" date="2007" name="J. Biol. Chem.">
        <title>Export pathway selectivity of Escherichia coli twin arginine translocation signal peptides.</title>
        <authorList>
            <person name="Tullman-Ercek D."/>
            <person name="DeLisa M.P."/>
            <person name="Kawarasaki Y."/>
            <person name="Iranpour P."/>
            <person name="Ribnicky B."/>
            <person name="Palmer T."/>
            <person name="Georgiou G."/>
        </authorList>
    </citation>
    <scope>EXPORT VIA THE TAT-SYSTEM AND THE SEC-SYSTEM</scope>
</reference>
<reference key="13">
    <citation type="journal article" date="2010" name="PLoS ONE">
        <title>Visualizing interactions along the Escherichia coli twin-arginine translocation pathway using protein fragment complementation.</title>
        <authorList>
            <person name="Kostecki J.S."/>
            <person name="Li H."/>
            <person name="Turner R.J."/>
            <person name="DeLisa M.P."/>
        </authorList>
    </citation>
    <scope>INTERACTION OF SIGNAL PEPTIDE WITH DMSD; TATB AND TATC</scope>
    <scope>MUTAGENESIS OF 17-ARG-ARG-18</scope>
</reference>
<accession>P18775</accession>
<feature type="signal peptide" description="Tat-type signal" evidence="2 7">
    <location>
        <begin position="1"/>
        <end position="45"/>
    </location>
</feature>
<feature type="chain" id="PRO_0000019143" description="Dimethyl sulfoxide reductase DmsA">
    <location>
        <begin position="46"/>
        <end position="814"/>
    </location>
</feature>
<feature type="domain" description="4Fe-4S Mo/W bis-MGD-type" evidence="3">
    <location>
        <begin position="56"/>
        <end position="118"/>
    </location>
</feature>
<feature type="binding site" evidence="3">
    <location>
        <position position="63"/>
    </location>
    <ligand>
        <name>[4Fe-4S] cluster</name>
        <dbReference type="ChEBI" id="CHEBI:49883"/>
    </ligand>
</feature>
<feature type="binding site" evidence="3">
    <location>
        <position position="67"/>
    </location>
    <ligand>
        <name>[4Fe-4S] cluster</name>
        <dbReference type="ChEBI" id="CHEBI:49883"/>
    </ligand>
</feature>
<feature type="binding site" evidence="3">
    <location>
        <position position="71"/>
    </location>
    <ligand>
        <name>[4Fe-4S] cluster</name>
        <dbReference type="ChEBI" id="CHEBI:49883"/>
    </ligand>
</feature>
<feature type="binding site" evidence="3">
    <location>
        <position position="104"/>
    </location>
    <ligand>
        <name>[4Fe-4S] cluster</name>
        <dbReference type="ChEBI" id="CHEBI:49883"/>
    </ligand>
</feature>
<feature type="binding site" evidence="1">
    <location>
        <begin position="172"/>
        <end position="176"/>
    </location>
    <ligand>
        <name>Mo-bis(molybdopterin guanine dinucleotide)</name>
        <dbReference type="ChEBI" id="CHEBI:60539"/>
    </ligand>
</feature>
<feature type="binding site" evidence="1">
    <location>
        <position position="205"/>
    </location>
    <ligand>
        <name>Mo-bis(molybdopterin guanine dinucleotide)</name>
        <dbReference type="ChEBI" id="CHEBI:60539"/>
    </ligand>
    <ligandPart>
        <name>Mo</name>
        <dbReference type="ChEBI" id="CHEBI:28685"/>
    </ligandPart>
</feature>
<feature type="binding site" evidence="1">
    <location>
        <begin position="244"/>
        <end position="245"/>
    </location>
    <ligand>
        <name>Mo-bis(molybdopterin guanine dinucleotide)</name>
        <dbReference type="ChEBI" id="CHEBI:60539"/>
    </ligand>
</feature>
<feature type="binding site" evidence="1">
    <location>
        <begin position="270"/>
        <end position="271"/>
    </location>
    <ligand>
        <name>Mo-bis(molybdopterin guanine dinucleotide)</name>
        <dbReference type="ChEBI" id="CHEBI:60539"/>
    </ligand>
</feature>
<feature type="binding site" evidence="1">
    <location>
        <begin position="291"/>
        <end position="293"/>
    </location>
    <ligand>
        <name>Mo-bis(molybdopterin guanine dinucleotide)</name>
        <dbReference type="ChEBI" id="CHEBI:60539"/>
    </ligand>
</feature>
<feature type="binding site" evidence="1">
    <location>
        <begin position="386"/>
        <end position="387"/>
    </location>
    <ligand>
        <name>Mo-bis(molybdopterin guanine dinucleotide)</name>
        <dbReference type="ChEBI" id="CHEBI:60539"/>
    </ligand>
</feature>
<feature type="binding site" evidence="1">
    <location>
        <position position="390"/>
    </location>
    <ligand>
        <name>Mo-bis(molybdopterin guanine dinucleotide)</name>
        <dbReference type="ChEBI" id="CHEBI:60539"/>
    </ligand>
</feature>
<feature type="binding site" evidence="1">
    <location>
        <position position="488"/>
    </location>
    <ligand>
        <name>Mo-bis(molybdopterin guanine dinucleotide)</name>
        <dbReference type="ChEBI" id="CHEBI:60539"/>
    </ligand>
</feature>
<feature type="binding site" evidence="1">
    <location>
        <begin position="512"/>
        <end position="513"/>
    </location>
    <ligand>
        <name>Mo-bis(molybdopterin guanine dinucleotide)</name>
        <dbReference type="ChEBI" id="CHEBI:60539"/>
    </ligand>
</feature>
<feature type="binding site" evidence="1">
    <location>
        <position position="701"/>
    </location>
    <ligand>
        <name>Mo-bis(molybdopterin guanine dinucleotide)</name>
        <dbReference type="ChEBI" id="CHEBI:60539"/>
    </ligand>
</feature>
<feature type="binding site" evidence="1">
    <location>
        <begin position="707"/>
        <end position="709"/>
    </location>
    <ligand>
        <name>Mo-bis(molybdopterin guanine dinucleotide)</name>
        <dbReference type="ChEBI" id="CHEBI:60539"/>
    </ligand>
</feature>
<feature type="binding site" evidence="1">
    <location>
        <position position="788"/>
    </location>
    <ligand>
        <name>Mo-bis(molybdopterin guanine dinucleotide)</name>
        <dbReference type="ChEBI" id="CHEBI:60539"/>
    </ligand>
</feature>
<feature type="binding site" evidence="1">
    <location>
        <begin position="804"/>
        <end position="805"/>
    </location>
    <ligand>
        <name>Mo-bis(molybdopterin guanine dinucleotide)</name>
        <dbReference type="ChEBI" id="CHEBI:60539"/>
    </ligand>
</feature>
<feature type="mutagenesis site" description="Not targeted to the membrane, does not support anaerobic growth." evidence="5">
    <original>R</original>
    <variation>S</variation>
    <location>
        <position position="17"/>
    </location>
</feature>
<feature type="mutagenesis site" description="No alteration of the growth, expression, or catalytic activities." evidence="10">
    <original>K</original>
    <variation>D</variation>
    <location>
        <position position="57"/>
    </location>
</feature>
<feature type="mutagenesis site" description="Electron transfer from the 4Fe-4S clusters of DmsB to the Mo-bisMGD of DmsA is blocked. Little effect on the coordination sphere of the molybdenum and only minor effects on its redox chemistry." evidence="4 10">
    <original>C</original>
    <variation>S</variation>
    <location>
        <position position="67"/>
    </location>
</feature>
<feature type="mutagenesis site" description="Cannot support growth." evidence="10">
    <original>C</original>
    <variation>S</variation>
    <location>
        <position position="71"/>
    </location>
</feature>
<feature type="mutagenesis site" description="No alteration of the growth, expression, or catalytic activities." evidence="10">
    <original>C</original>
    <variation>S</variation>
    <location>
        <position position="104"/>
    </location>
</feature>
<feature type="mutagenesis site" description="Electron transfer from the 4Fe-4S clusters of DmsB to the Mo-bisMGD of DmsA is blocked. Little effect on the coordination sphere of the molybdenum and only minor effects on its redox chemistry." evidence="4 10">
    <original>R</original>
    <variation>S</variation>
    <location>
        <position position="106"/>
    </location>
</feature>
<comment type="function">
    <text evidence="7">Catalyzes the reduction of dimethyl sulfoxide (DMSO) to dimethyl sulfide (DMS). DMSO reductase serves as the terminal reductase under anaerobic conditions, with DMSO being the terminal electron acceptor. Terminal reductase during anaerobic growth on various sulfoxides and N-oxide compounds. Allows E.coli to grow anaerobically on DMSO as respiratory oxidant.</text>
</comment>
<comment type="catalytic activity">
    <reaction>
        <text>dimethyl sulfide + a menaquinone + H2O = dimethyl sulfoxide + a menaquinol</text>
        <dbReference type="Rhea" id="RHEA:28494"/>
        <dbReference type="Rhea" id="RHEA-COMP:9537"/>
        <dbReference type="Rhea" id="RHEA-COMP:9539"/>
        <dbReference type="ChEBI" id="CHEBI:15377"/>
        <dbReference type="ChEBI" id="CHEBI:16374"/>
        <dbReference type="ChEBI" id="CHEBI:17437"/>
        <dbReference type="ChEBI" id="CHEBI:18151"/>
        <dbReference type="ChEBI" id="CHEBI:28262"/>
        <dbReference type="EC" id="1.8.5.3"/>
    </reaction>
</comment>
<comment type="cofactor">
    <cofactor evidence="12">
        <name>[4Fe-4S] cluster</name>
        <dbReference type="ChEBI" id="CHEBI:49883"/>
    </cofactor>
    <text evidence="12">Binds 1 [4Fe-4S] cluster.</text>
</comment>
<comment type="cofactor">
    <cofactor evidence="4 8 9">
        <name>Mo-bis(molybdopterin guanine dinucleotide)</name>
        <dbReference type="ChEBI" id="CHEBI:60539"/>
    </cofactor>
    <text evidence="4 8 9">Binds 1 molybdenum-bis(molybdopterin guanine dinucleotide) (Mo-bis-MGD) cofactor per subunit.</text>
</comment>
<comment type="activity regulation">
    <text evidence="9 11">Inhibited by dithionite, sodium hydrogensulfite and tungstate.</text>
</comment>
<comment type="biophysicochemical properties">
    <kinetics>
        <KM evidence="11">0.043 mM for 2-chloropyridine N-oxide (at pH 5 and at 30 degrees Celsius)</KM>
        <KM evidence="11">0.045 mM for 3-amidopyridine N-oxide (at pH 5 and at 30 degrees Celsius)</KM>
        <KM evidence="11">0.06 mM for tertramethylene sulfoxide (at pH 5 and at 30 degrees Celsius)</KM>
        <KM evidence="11">0.09 mM for methionine sulfoxide (at pH 5 and at 30 degrees Celsius)</KM>
        <KM evidence="11">0.246 mM for 4-phenylpyridine N-oxide (at pH 5 and at 30 degrees Celsius)</KM>
        <KM evidence="11">0.83 mM for dimethyldodecylamin N-oxide (at pH 5 and at 30 degrees Celsius)</KM>
        <KM evidence="8">0.18 mM for DMSO (at pH 6.8 and at 23 degrees Celsius)</KM>
        <KM evidence="8">0.47 mM for L-methionine sulfoxide (at pH 6.8 and at 23 degrees Celsius)</KM>
        <KM evidence="8">0.5 mM for nicotinamide N-oxide (at pH 6.8 and at 23 degrees Celsius)</KM>
        <KM evidence="8">0.6 mM for TMAO (at pH 6.8 and at 23 degrees Celsius)</KM>
        <KM evidence="8">1 mM for 4-picoline N-oxide (at pH 6.8 and at 23 degrees Celsius)</KM>
        <KM evidence="11">20.2 mM for TMAO (at pH 5 and at 30 degrees Celsius)</KM>
    </kinetics>
</comment>
<comment type="subunit">
    <text evidence="8">Heterotrimeric enzyme composed of a catalytic heterodimer (DmsAB) and a membrane anchor protein (DmsC).</text>
</comment>
<comment type="interaction">
    <interactant intactId="EBI-4411104">
        <id>P18775</id>
    </interactant>
    <interactant intactId="EBI-1120825">
        <id>P18776</id>
        <label>dmsB</label>
    </interactant>
    <organismsDiffer>false</organismsDiffer>
    <experiments>2</experiments>
</comment>
<comment type="interaction">
    <interactant intactId="EBI-4411104">
        <id>P18775</id>
    </interactant>
    <interactant intactId="EBI-4406374">
        <id>P69853</id>
        <label>dmsD</label>
    </interactant>
    <organismsDiffer>false</organismsDiffer>
    <experiments>8</experiments>
</comment>
<comment type="subcellular location">
    <subcellularLocation>
        <location evidence="6 8">Cell membrane</location>
        <topology evidence="6 8">Peripheral membrane protein</topology>
        <orientation evidence="6 8">Cytoplasmic side</orientation>
    </subcellularLocation>
</comment>
<comment type="PTM">
    <text>Exported by the Tat system. The position of the signal peptide cleavage has been experimentally proven. Can also be exported by the Sec system.</text>
</comment>
<comment type="miscellaneous">
    <text>The Tat signal sequence is essential for the expression of dmsA, the stability of the DmsAB dimer and membrane targeting. Despite the presence of a signal sequence, DmsA is not exported to the periplasm.</text>
</comment>
<comment type="similarity">
    <text evidence="12">Belongs to the prokaryotic molybdopterin-containing oxidoreductase family.</text>
</comment>
<comment type="sequence caution" evidence="12">
    <conflict type="erroneous initiation">
        <sequence resource="EMBL-CDS" id="AAA83843"/>
    </conflict>
    <text>Truncated N-terminus.</text>
</comment>
<protein>
    <recommendedName>
        <fullName>Dimethyl sulfoxide reductase DmsA</fullName>
        <shortName>DMSO reductase</shortName>
        <shortName>DMSOR</shortName>
        <shortName>Me2SO reductase</shortName>
        <ecNumber>1.8.5.3</ecNumber>
    </recommendedName>
</protein>
<keyword id="KW-0004">4Fe-4S</keyword>
<keyword id="KW-1003">Cell membrane</keyword>
<keyword id="KW-0903">Direct protein sequencing</keyword>
<keyword id="KW-0408">Iron</keyword>
<keyword id="KW-0411">Iron-sulfur</keyword>
<keyword id="KW-0472">Membrane</keyword>
<keyword id="KW-0479">Metal-binding</keyword>
<keyword id="KW-0500">Molybdenum</keyword>
<keyword id="KW-0560">Oxidoreductase</keyword>
<keyword id="KW-1185">Reference proteome</keyword>
<keyword id="KW-0732">Signal</keyword>
<organism>
    <name type="scientific">Escherichia coli (strain K12)</name>
    <dbReference type="NCBI Taxonomy" id="83333"/>
    <lineage>
        <taxon>Bacteria</taxon>
        <taxon>Pseudomonadati</taxon>
        <taxon>Pseudomonadota</taxon>
        <taxon>Gammaproteobacteria</taxon>
        <taxon>Enterobacterales</taxon>
        <taxon>Enterobacteriaceae</taxon>
        <taxon>Escherichia</taxon>
    </lineage>
</organism>
<dbReference type="EC" id="1.8.5.3"/>
<dbReference type="EMBL" id="J03412">
    <property type="protein sequence ID" value="AAA83843.1"/>
    <property type="status" value="ALT_INIT"/>
    <property type="molecule type" value="Genomic_DNA"/>
</dbReference>
<dbReference type="EMBL" id="U00096">
    <property type="protein sequence ID" value="AAC73980.2"/>
    <property type="molecule type" value="Genomic_DNA"/>
</dbReference>
<dbReference type="EMBL" id="AP009048">
    <property type="protein sequence ID" value="BAA35626.2"/>
    <property type="molecule type" value="Genomic_DNA"/>
</dbReference>
<dbReference type="PIR" id="S03785">
    <property type="entry name" value="S03785"/>
</dbReference>
<dbReference type="RefSeq" id="NP_415414.4">
    <property type="nucleotide sequence ID" value="NC_000913.3"/>
</dbReference>
<dbReference type="RefSeq" id="WP_000850303.1">
    <property type="nucleotide sequence ID" value="NZ_SSZK01000002.1"/>
</dbReference>
<dbReference type="SMR" id="P18775"/>
<dbReference type="BioGRID" id="4261945">
    <property type="interactions" value="76"/>
</dbReference>
<dbReference type="BioGRID" id="849882">
    <property type="interactions" value="3"/>
</dbReference>
<dbReference type="ComplexPortal" id="CPX-320">
    <property type="entry name" value="DmaABC DMSO reductase complex"/>
</dbReference>
<dbReference type="DIP" id="DIP-9452N"/>
<dbReference type="FunCoup" id="P18775">
    <property type="interactions" value="81"/>
</dbReference>
<dbReference type="IntAct" id="P18775">
    <property type="interactions" value="8"/>
</dbReference>
<dbReference type="MINT" id="P18775"/>
<dbReference type="STRING" id="511145.b0894"/>
<dbReference type="TCDB" id="5.A.3.3.2">
    <property type="family name" value="the prokaryotic molybdopterin-containing oxidoreductase (pmo) family"/>
</dbReference>
<dbReference type="jPOST" id="P18775"/>
<dbReference type="PaxDb" id="511145-b0894"/>
<dbReference type="EnsemblBacteria" id="AAC73980">
    <property type="protein sequence ID" value="AAC73980"/>
    <property type="gene ID" value="b0894"/>
</dbReference>
<dbReference type="GeneID" id="75170969"/>
<dbReference type="GeneID" id="945508"/>
<dbReference type="KEGG" id="ecj:JW5118"/>
<dbReference type="KEGG" id="eco:b0894"/>
<dbReference type="KEGG" id="ecoc:C3026_05530"/>
<dbReference type="PATRIC" id="fig|1411691.4.peg.1383"/>
<dbReference type="EchoBASE" id="EB0228"/>
<dbReference type="eggNOG" id="COG0243">
    <property type="taxonomic scope" value="Bacteria"/>
</dbReference>
<dbReference type="HOGENOM" id="CLU_000422_13_3_6"/>
<dbReference type="InParanoid" id="P18775"/>
<dbReference type="OMA" id="IPMFLWT"/>
<dbReference type="OrthoDB" id="9815647at2"/>
<dbReference type="PhylomeDB" id="P18775"/>
<dbReference type="BioCyc" id="EcoCyc:DMSA-MONOMER"/>
<dbReference type="BioCyc" id="MetaCyc:DMSA-MONOMER"/>
<dbReference type="BRENDA" id="1.8.5.3">
    <property type="organism ID" value="2026"/>
</dbReference>
<dbReference type="PRO" id="PR:P18775"/>
<dbReference type="Proteomes" id="UP000000625">
    <property type="component" value="Chromosome"/>
</dbReference>
<dbReference type="GO" id="GO:0009390">
    <property type="term" value="C:dimethyl sulfoxide reductase complex"/>
    <property type="evidence" value="ECO:0000314"/>
    <property type="project" value="EcoCyc"/>
</dbReference>
<dbReference type="GO" id="GO:0030288">
    <property type="term" value="C:outer membrane-bounded periplasmic space"/>
    <property type="evidence" value="ECO:0000318"/>
    <property type="project" value="GO_Central"/>
</dbReference>
<dbReference type="GO" id="GO:0005886">
    <property type="term" value="C:plasma membrane"/>
    <property type="evidence" value="ECO:0000314"/>
    <property type="project" value="ComplexPortal"/>
</dbReference>
<dbReference type="GO" id="GO:0051539">
    <property type="term" value="F:4 iron, 4 sulfur cluster binding"/>
    <property type="evidence" value="ECO:0000315"/>
    <property type="project" value="EcoCyc"/>
</dbReference>
<dbReference type="GO" id="GO:0009389">
    <property type="term" value="F:dimethyl sulfoxide reductase activity"/>
    <property type="evidence" value="ECO:0000269"/>
    <property type="project" value="EcoCyc"/>
</dbReference>
<dbReference type="GO" id="GO:0009055">
    <property type="term" value="F:electron transfer activity"/>
    <property type="evidence" value="ECO:0000315"/>
    <property type="project" value="EcoCyc"/>
</dbReference>
<dbReference type="GO" id="GO:0030151">
    <property type="term" value="F:molybdenum ion binding"/>
    <property type="evidence" value="ECO:0000318"/>
    <property type="project" value="GO_Central"/>
</dbReference>
<dbReference type="GO" id="GO:0043546">
    <property type="term" value="F:molybdopterin cofactor binding"/>
    <property type="evidence" value="ECO:0007669"/>
    <property type="project" value="InterPro"/>
</dbReference>
<dbReference type="GO" id="GO:0019645">
    <property type="term" value="P:anaerobic electron transport chain"/>
    <property type="evidence" value="ECO:0000314"/>
    <property type="project" value="ComplexPortal"/>
</dbReference>
<dbReference type="GO" id="GO:0009061">
    <property type="term" value="P:anaerobic respiration"/>
    <property type="evidence" value="ECO:0000270"/>
    <property type="project" value="EcoCyc"/>
</dbReference>
<dbReference type="GO" id="GO:0018907">
    <property type="term" value="P:dimethyl sulfoxide metabolic process"/>
    <property type="evidence" value="ECO:0000314"/>
    <property type="project" value="ComplexPortal"/>
</dbReference>
<dbReference type="CDD" id="cd02794">
    <property type="entry name" value="MopB_CT_DmsA-EC"/>
    <property type="match status" value="1"/>
</dbReference>
<dbReference type="CDD" id="cd02770">
    <property type="entry name" value="MopB_DmsA-EC"/>
    <property type="match status" value="1"/>
</dbReference>
<dbReference type="FunFam" id="2.40.40.20:FF:000010">
    <property type="entry name" value="Anaerobic dimethyl sulfoxide reductase subunit A"/>
    <property type="match status" value="1"/>
</dbReference>
<dbReference type="FunFam" id="3.40.50.12440:FF:000003">
    <property type="entry name" value="Anaerobic dimethyl sulfoxide reductase subunit A"/>
    <property type="match status" value="1"/>
</dbReference>
<dbReference type="FunFam" id="3.40.50.12440:FF:000002">
    <property type="entry name" value="Anaerobic dimethyl sulfoxide reductase, A subunit"/>
    <property type="match status" value="1"/>
</dbReference>
<dbReference type="FunFam" id="3.40.50.740:FF:000005">
    <property type="entry name" value="Anaerobic dimethyl sulfoxide reductase, A subunit"/>
    <property type="match status" value="1"/>
</dbReference>
<dbReference type="FunFam" id="2.20.25.90:FF:000004">
    <property type="entry name" value="Dimethyl sulfoxide reductase subunit A"/>
    <property type="match status" value="1"/>
</dbReference>
<dbReference type="FunFam" id="3.40.228.10:FF:000004">
    <property type="entry name" value="Dimethyl sulfoxide reductase subunit A"/>
    <property type="match status" value="1"/>
</dbReference>
<dbReference type="Gene3D" id="2.40.40.20">
    <property type="match status" value="1"/>
</dbReference>
<dbReference type="Gene3D" id="3.40.50.12440">
    <property type="match status" value="2"/>
</dbReference>
<dbReference type="Gene3D" id="3.40.50.740">
    <property type="match status" value="1"/>
</dbReference>
<dbReference type="Gene3D" id="3.40.228.10">
    <property type="entry name" value="Dimethylsulfoxide Reductase, domain 2"/>
    <property type="match status" value="1"/>
</dbReference>
<dbReference type="InterPro" id="IPR011888">
    <property type="entry name" value="Anaer_DMSO_reductase"/>
</dbReference>
<dbReference type="InterPro" id="IPR009010">
    <property type="entry name" value="Asp_de-COase-like_dom_sf"/>
</dbReference>
<dbReference type="InterPro" id="IPR006657">
    <property type="entry name" value="MoPterin_dinucl-bd_dom"/>
</dbReference>
<dbReference type="InterPro" id="IPR006656">
    <property type="entry name" value="Mopterin_OxRdtase"/>
</dbReference>
<dbReference type="InterPro" id="IPR006963">
    <property type="entry name" value="Mopterin_OxRdtase_4Fe-4S_dom"/>
</dbReference>
<dbReference type="InterPro" id="IPR006655">
    <property type="entry name" value="Mopterin_OxRdtase_prok_CS"/>
</dbReference>
<dbReference type="InterPro" id="IPR027467">
    <property type="entry name" value="MopterinOxRdtase_cofactor_BS"/>
</dbReference>
<dbReference type="InterPro" id="IPR050612">
    <property type="entry name" value="Prok_Mopterin_Oxidored"/>
</dbReference>
<dbReference type="InterPro" id="IPR006311">
    <property type="entry name" value="TAT_signal"/>
</dbReference>
<dbReference type="InterPro" id="IPR019546">
    <property type="entry name" value="TAT_signal_bac_arc"/>
</dbReference>
<dbReference type="NCBIfam" id="TIGR02166">
    <property type="entry name" value="dmsA_ynfE"/>
    <property type="match status" value="1"/>
</dbReference>
<dbReference type="NCBIfam" id="NF011566">
    <property type="entry name" value="PRK14990.1"/>
    <property type="match status" value="1"/>
</dbReference>
<dbReference type="NCBIfam" id="TIGR01409">
    <property type="entry name" value="TAT_signal_seq"/>
    <property type="match status" value="1"/>
</dbReference>
<dbReference type="PANTHER" id="PTHR43742:SF3">
    <property type="entry name" value="DIMETHYL SULFOXIDE REDUCTASE DMSA"/>
    <property type="match status" value="1"/>
</dbReference>
<dbReference type="PANTHER" id="PTHR43742">
    <property type="entry name" value="TRIMETHYLAMINE-N-OXIDE REDUCTASE"/>
    <property type="match status" value="1"/>
</dbReference>
<dbReference type="Pfam" id="PF04879">
    <property type="entry name" value="Molybdop_Fe4S4"/>
    <property type="match status" value="1"/>
</dbReference>
<dbReference type="Pfam" id="PF00384">
    <property type="entry name" value="Molybdopterin"/>
    <property type="match status" value="1"/>
</dbReference>
<dbReference type="Pfam" id="PF01568">
    <property type="entry name" value="Molydop_binding"/>
    <property type="match status" value="1"/>
</dbReference>
<dbReference type="SMART" id="SM00926">
    <property type="entry name" value="Molybdop_Fe4S4"/>
    <property type="match status" value="1"/>
</dbReference>
<dbReference type="SUPFAM" id="SSF50692">
    <property type="entry name" value="ADC-like"/>
    <property type="match status" value="1"/>
</dbReference>
<dbReference type="SUPFAM" id="SSF53706">
    <property type="entry name" value="Formate dehydrogenase/DMSO reductase, domains 1-3"/>
    <property type="match status" value="1"/>
</dbReference>
<dbReference type="PROSITE" id="PS51669">
    <property type="entry name" value="4FE4S_MOW_BIS_MGD"/>
    <property type="match status" value="1"/>
</dbReference>
<dbReference type="PROSITE" id="PS00551">
    <property type="entry name" value="MOLYBDOPTERIN_PROK_1"/>
    <property type="match status" value="1"/>
</dbReference>
<dbReference type="PROSITE" id="PS00490">
    <property type="entry name" value="MOLYBDOPTERIN_PROK_2"/>
    <property type="match status" value="1"/>
</dbReference>
<dbReference type="PROSITE" id="PS00932">
    <property type="entry name" value="MOLYBDOPTERIN_PROK_3"/>
    <property type="match status" value="1"/>
</dbReference>
<dbReference type="PROSITE" id="PS51318">
    <property type="entry name" value="TAT"/>
    <property type="match status" value="1"/>
</dbReference>
<sequence>MKTKIPDAVLAAEVSRRGLVKTTAIGGLAMASSALTLPFSRIAHAVDSAIPTKSDEKVIWSACTVNCGSRCPLRMHVVDGEIKYVETDNTGDDNYDGLHQVRACLRGRSMRRRVYNPDRLKYPMKRVGARGEGKFERISWEEAYDIIATNMQRLIKEYGNESIYLNYGTGTLGGTMTRSWPPGNTLVARLMNCCGGYLNHYGDYSSAQIAEGLNYTYGGWADGNSPSDIENSKLVVLFGNNPGETRMSGGGVTYYLEQARQKSNARMIIIDPRYTDTGAGREDEWIPIRPGTDAALVNGLAYVMITENLVDQAFLDKYCVGYDEKTLPASAPKNGHYKAYILGEGPDGVAKTPEWASQITGVPADKIIKLAREIGSTKPAFISQGWGPQRHANGEIATRAISMLAILTGNVGINGGNSGAREGSYSLPFVRMPTLENPIQTSISMFMWTDAIERGPEMTALRDGVRGKDKLDVPIKMIWNYAGNCLINQHSEINRTHEILQDDKKCELIVVIDCHMTSSAKYADILLPDCTASEQMDFALDASCGNMSYVIFNDQVIKPRFECKTIYEMTSELAKRLGVEQQFTEGRTQEEWMRHLYAQSREAIPELPTFEEFRKQGIFKKRDPQGHHVAYKAFREDPQANPLTTPSGKIEIYSQALADIAATWELPEGDVIDPLPIYTPGFESYQDPLNKQYPLQLTGFHYKSRVHSTYGNVDVLKAACRQEMWINPLDAQKRGIHNGDKVRIFNDRGEVHIEAKVTPRMMPGVVALGEGAWYDPDAKRVDKGGCINVLTTQRPSPLAKGNPSHTNLVQVEKV</sequence>